<accession>A4TS84</accession>
<reference key="1">
    <citation type="submission" date="2007-02" db="EMBL/GenBank/DDBJ databases">
        <title>Complete sequence of chromosome of Yersinia pestis Pestoides F.</title>
        <authorList>
            <consortium name="US DOE Joint Genome Institute"/>
            <person name="Copeland A."/>
            <person name="Lucas S."/>
            <person name="Lapidus A."/>
            <person name="Barry K."/>
            <person name="Detter J.C."/>
            <person name="Glavina del Rio T."/>
            <person name="Hammon N."/>
            <person name="Israni S."/>
            <person name="Dalin E."/>
            <person name="Tice H."/>
            <person name="Pitluck S."/>
            <person name="Di Bartolo G."/>
            <person name="Chain P."/>
            <person name="Malfatti S."/>
            <person name="Shin M."/>
            <person name="Vergez L."/>
            <person name="Schmutz J."/>
            <person name="Larimer F."/>
            <person name="Land M."/>
            <person name="Hauser L."/>
            <person name="Worsham P."/>
            <person name="Chu M."/>
            <person name="Bearden S."/>
            <person name="Garcia E."/>
            <person name="Richardson P."/>
        </authorList>
    </citation>
    <scope>NUCLEOTIDE SEQUENCE [LARGE SCALE GENOMIC DNA]</scope>
    <source>
        <strain>Pestoides F</strain>
    </source>
</reference>
<dbReference type="EMBL" id="CP000668">
    <property type="protein sequence ID" value="ABP42146.1"/>
    <property type="molecule type" value="Genomic_DNA"/>
</dbReference>
<dbReference type="RefSeq" id="WP_002208943.1">
    <property type="nucleotide sequence ID" value="NZ_CP009715.1"/>
</dbReference>
<dbReference type="SMR" id="A4TS84"/>
<dbReference type="GeneID" id="96663576"/>
<dbReference type="KEGG" id="ypp:YPDSF_3801"/>
<dbReference type="PATRIC" id="fig|386656.14.peg.719"/>
<dbReference type="GO" id="GO:0009376">
    <property type="term" value="C:HslUV protease complex"/>
    <property type="evidence" value="ECO:0007669"/>
    <property type="project" value="UniProtKB-UniRule"/>
</dbReference>
<dbReference type="GO" id="GO:0005524">
    <property type="term" value="F:ATP binding"/>
    <property type="evidence" value="ECO:0007669"/>
    <property type="project" value="UniProtKB-UniRule"/>
</dbReference>
<dbReference type="GO" id="GO:0016887">
    <property type="term" value="F:ATP hydrolysis activity"/>
    <property type="evidence" value="ECO:0007669"/>
    <property type="project" value="InterPro"/>
</dbReference>
<dbReference type="GO" id="GO:0008233">
    <property type="term" value="F:peptidase activity"/>
    <property type="evidence" value="ECO:0007669"/>
    <property type="project" value="InterPro"/>
</dbReference>
<dbReference type="GO" id="GO:0036402">
    <property type="term" value="F:proteasome-activating activity"/>
    <property type="evidence" value="ECO:0007669"/>
    <property type="project" value="UniProtKB-UniRule"/>
</dbReference>
<dbReference type="GO" id="GO:0043335">
    <property type="term" value="P:protein unfolding"/>
    <property type="evidence" value="ECO:0007669"/>
    <property type="project" value="UniProtKB-UniRule"/>
</dbReference>
<dbReference type="GO" id="GO:0051603">
    <property type="term" value="P:proteolysis involved in protein catabolic process"/>
    <property type="evidence" value="ECO:0007669"/>
    <property type="project" value="TreeGrafter"/>
</dbReference>
<dbReference type="CDD" id="cd19498">
    <property type="entry name" value="RecA-like_HslU"/>
    <property type="match status" value="1"/>
</dbReference>
<dbReference type="FunFam" id="1.10.8.10:FF:000028">
    <property type="entry name" value="ATP-dependent protease ATPase subunit HslU"/>
    <property type="match status" value="2"/>
</dbReference>
<dbReference type="FunFam" id="1.10.8.60:FF:000027">
    <property type="entry name" value="ATP-dependent protease ATPase subunit HslU"/>
    <property type="match status" value="1"/>
</dbReference>
<dbReference type="FunFam" id="3.40.50.300:FF:000213">
    <property type="entry name" value="ATP-dependent protease ATPase subunit HslU"/>
    <property type="match status" value="1"/>
</dbReference>
<dbReference type="FunFam" id="3.40.50.300:FF:000220">
    <property type="entry name" value="ATP-dependent protease ATPase subunit HslU"/>
    <property type="match status" value="1"/>
</dbReference>
<dbReference type="Gene3D" id="1.10.8.60">
    <property type="match status" value="1"/>
</dbReference>
<dbReference type="Gene3D" id="1.10.8.10">
    <property type="entry name" value="DNA helicase RuvA subunit, C-terminal domain"/>
    <property type="match status" value="1"/>
</dbReference>
<dbReference type="Gene3D" id="3.40.50.300">
    <property type="entry name" value="P-loop containing nucleotide triphosphate hydrolases"/>
    <property type="match status" value="2"/>
</dbReference>
<dbReference type="HAMAP" id="MF_00249">
    <property type="entry name" value="HslU"/>
    <property type="match status" value="1"/>
</dbReference>
<dbReference type="InterPro" id="IPR003593">
    <property type="entry name" value="AAA+_ATPase"/>
</dbReference>
<dbReference type="InterPro" id="IPR050052">
    <property type="entry name" value="ATP-dep_Clp_protease_ClpX"/>
</dbReference>
<dbReference type="InterPro" id="IPR003959">
    <property type="entry name" value="ATPase_AAA_core"/>
</dbReference>
<dbReference type="InterPro" id="IPR019489">
    <property type="entry name" value="Clp_ATPase_C"/>
</dbReference>
<dbReference type="InterPro" id="IPR004491">
    <property type="entry name" value="HslU"/>
</dbReference>
<dbReference type="InterPro" id="IPR027417">
    <property type="entry name" value="P-loop_NTPase"/>
</dbReference>
<dbReference type="NCBIfam" id="TIGR00390">
    <property type="entry name" value="hslU"/>
    <property type="match status" value="1"/>
</dbReference>
<dbReference type="NCBIfam" id="NF003544">
    <property type="entry name" value="PRK05201.1"/>
    <property type="match status" value="1"/>
</dbReference>
<dbReference type="PANTHER" id="PTHR48102">
    <property type="entry name" value="ATP-DEPENDENT CLP PROTEASE ATP-BINDING SUBUNIT CLPX-LIKE, MITOCHONDRIAL-RELATED"/>
    <property type="match status" value="1"/>
</dbReference>
<dbReference type="PANTHER" id="PTHR48102:SF3">
    <property type="entry name" value="ATP-DEPENDENT PROTEASE ATPASE SUBUNIT HSLU"/>
    <property type="match status" value="1"/>
</dbReference>
<dbReference type="Pfam" id="PF00004">
    <property type="entry name" value="AAA"/>
    <property type="match status" value="1"/>
</dbReference>
<dbReference type="Pfam" id="PF07724">
    <property type="entry name" value="AAA_2"/>
    <property type="match status" value="1"/>
</dbReference>
<dbReference type="SMART" id="SM00382">
    <property type="entry name" value="AAA"/>
    <property type="match status" value="1"/>
</dbReference>
<dbReference type="SMART" id="SM01086">
    <property type="entry name" value="ClpB_D2-small"/>
    <property type="match status" value="1"/>
</dbReference>
<dbReference type="SUPFAM" id="SSF52540">
    <property type="entry name" value="P-loop containing nucleoside triphosphate hydrolases"/>
    <property type="match status" value="1"/>
</dbReference>
<gene>
    <name evidence="1" type="primary">hslU</name>
    <name type="ordered locus">YPDSF_3801</name>
</gene>
<proteinExistence type="inferred from homology"/>
<evidence type="ECO:0000255" key="1">
    <source>
        <dbReference type="HAMAP-Rule" id="MF_00249"/>
    </source>
</evidence>
<keyword id="KW-0067">ATP-binding</keyword>
<keyword id="KW-0143">Chaperone</keyword>
<keyword id="KW-0963">Cytoplasm</keyword>
<keyword id="KW-0547">Nucleotide-binding</keyword>
<keyword id="KW-0346">Stress response</keyword>
<comment type="function">
    <text evidence="1">ATPase subunit of a proteasome-like degradation complex; this subunit has chaperone activity. The binding of ATP and its subsequent hydrolysis by HslU are essential for unfolding of protein substrates subsequently hydrolyzed by HslV. HslU recognizes the N-terminal part of its protein substrates and unfolds these before they are guided to HslV for hydrolysis.</text>
</comment>
<comment type="subunit">
    <text evidence="1">A double ring-shaped homohexamer of HslV is capped on each side by a ring-shaped HslU homohexamer. The assembly of the HslU/HslV complex is dependent on binding of ATP.</text>
</comment>
<comment type="subcellular location">
    <subcellularLocation>
        <location evidence="1">Cytoplasm</location>
    </subcellularLocation>
</comment>
<comment type="similarity">
    <text evidence="1">Belongs to the ClpX chaperone family. HslU subfamily.</text>
</comment>
<organism>
    <name type="scientific">Yersinia pestis (strain Pestoides F)</name>
    <dbReference type="NCBI Taxonomy" id="386656"/>
    <lineage>
        <taxon>Bacteria</taxon>
        <taxon>Pseudomonadati</taxon>
        <taxon>Pseudomonadota</taxon>
        <taxon>Gammaproteobacteria</taxon>
        <taxon>Enterobacterales</taxon>
        <taxon>Yersiniaceae</taxon>
        <taxon>Yersinia</taxon>
    </lineage>
</organism>
<feature type="chain" id="PRO_1000012835" description="ATP-dependent protease ATPase subunit HslU">
    <location>
        <begin position="1"/>
        <end position="443"/>
    </location>
</feature>
<feature type="binding site" evidence="1">
    <location>
        <position position="18"/>
    </location>
    <ligand>
        <name>ATP</name>
        <dbReference type="ChEBI" id="CHEBI:30616"/>
    </ligand>
</feature>
<feature type="binding site" evidence="1">
    <location>
        <begin position="60"/>
        <end position="65"/>
    </location>
    <ligand>
        <name>ATP</name>
        <dbReference type="ChEBI" id="CHEBI:30616"/>
    </ligand>
</feature>
<feature type="binding site" evidence="1">
    <location>
        <position position="256"/>
    </location>
    <ligand>
        <name>ATP</name>
        <dbReference type="ChEBI" id="CHEBI:30616"/>
    </ligand>
</feature>
<feature type="binding site" evidence="1">
    <location>
        <position position="321"/>
    </location>
    <ligand>
        <name>ATP</name>
        <dbReference type="ChEBI" id="CHEBI:30616"/>
    </ligand>
</feature>
<feature type="binding site" evidence="1">
    <location>
        <position position="393"/>
    </location>
    <ligand>
        <name>ATP</name>
        <dbReference type="ChEBI" id="CHEBI:30616"/>
    </ligand>
</feature>
<protein>
    <recommendedName>
        <fullName evidence="1">ATP-dependent protease ATPase subunit HslU</fullName>
    </recommendedName>
    <alternativeName>
        <fullName evidence="1">Unfoldase HslU</fullName>
    </alternativeName>
</protein>
<sequence>MSEMTPREIVSELDSHIIGQDKAKRAVAIALRNRWRRMQLNEELRHEVTPKNILMIGPTGVGKTEIARRLAKLANAPFIKVEATKFTEVGYVGKEVDSIIRDLTDAAVKMVRHQSIEKMRYRAEELAEERILDVLIPPAKNNWGVPDESQEPSATRQTFRKKLREGQLDDKEIEIDLAAAPMGVEIMAPPGMEEMTNQLQSMFQNIAGQKQKPRKIKIKEALKLLIEEEAAKLVNPEELKQQAIDAVEQHGIVFIDEIDKICKRGQTSGPDVSREGVQRDLLPLVEGCTVSTKHGMVKTDHILFIASGAFQVSSPSDLIPELQGRLPIRVELQALTTDDFERILTEPSASLTEQYKALMATEGVTIEFTREGIRKIAEAAWQVNERTENIGARRLHTVLERLMEDISYDASESSGQSITIDAEYVGKHLDELVADEDLSRFIL</sequence>
<name>HSLU_YERPP</name>